<evidence type="ECO:0000255" key="1">
    <source>
        <dbReference type="HAMAP-Rule" id="MF_00268"/>
    </source>
</evidence>
<evidence type="ECO:0000256" key="2">
    <source>
        <dbReference type="SAM" id="MobiDB-lite"/>
    </source>
</evidence>
<evidence type="ECO:0000305" key="3"/>
<accession>B0SLE9</accession>
<accession>P48290</accession>
<accession>Q93CF0</accession>
<dbReference type="EMBL" id="AF410431">
    <property type="protein sequence ID" value="AAL01117.1"/>
    <property type="molecule type" value="Genomic_DNA"/>
</dbReference>
<dbReference type="EMBL" id="CP000786">
    <property type="protein sequence ID" value="ABZ98535.1"/>
    <property type="molecule type" value="Genomic_DNA"/>
</dbReference>
<dbReference type="RefSeq" id="WP_012389396.1">
    <property type="nucleotide sequence ID" value="NC_010602.1"/>
</dbReference>
<dbReference type="SMR" id="B0SLE9"/>
<dbReference type="STRING" id="456481.LEPBI_I2446"/>
<dbReference type="KEGG" id="lbi:LEPBI_I2446"/>
<dbReference type="HOGENOM" id="CLU_040469_3_2_12"/>
<dbReference type="OrthoDB" id="9776733at2"/>
<dbReference type="BioCyc" id="LBIF456481:LEPBI_RS12070-MONOMER"/>
<dbReference type="Proteomes" id="UP000001847">
    <property type="component" value="Chromosome I"/>
</dbReference>
<dbReference type="GO" id="GO:0005829">
    <property type="term" value="C:cytosol"/>
    <property type="evidence" value="ECO:0007669"/>
    <property type="project" value="TreeGrafter"/>
</dbReference>
<dbReference type="GO" id="GO:0005524">
    <property type="term" value="F:ATP binding"/>
    <property type="evidence" value="ECO:0007669"/>
    <property type="project" value="UniProtKB-UniRule"/>
</dbReference>
<dbReference type="GO" id="GO:0016887">
    <property type="term" value="F:ATP hydrolysis activity"/>
    <property type="evidence" value="ECO:0007669"/>
    <property type="project" value="InterPro"/>
</dbReference>
<dbReference type="GO" id="GO:0140664">
    <property type="term" value="F:ATP-dependent DNA damage sensor activity"/>
    <property type="evidence" value="ECO:0007669"/>
    <property type="project" value="InterPro"/>
</dbReference>
<dbReference type="GO" id="GO:0003684">
    <property type="term" value="F:damaged DNA binding"/>
    <property type="evidence" value="ECO:0007669"/>
    <property type="project" value="UniProtKB-UniRule"/>
</dbReference>
<dbReference type="GO" id="GO:0003697">
    <property type="term" value="F:single-stranded DNA binding"/>
    <property type="evidence" value="ECO:0007669"/>
    <property type="project" value="UniProtKB-UniRule"/>
</dbReference>
<dbReference type="GO" id="GO:0006310">
    <property type="term" value="P:DNA recombination"/>
    <property type="evidence" value="ECO:0007669"/>
    <property type="project" value="UniProtKB-UniRule"/>
</dbReference>
<dbReference type="GO" id="GO:0006281">
    <property type="term" value="P:DNA repair"/>
    <property type="evidence" value="ECO:0007669"/>
    <property type="project" value="UniProtKB-UniRule"/>
</dbReference>
<dbReference type="GO" id="GO:0009432">
    <property type="term" value="P:SOS response"/>
    <property type="evidence" value="ECO:0007669"/>
    <property type="project" value="UniProtKB-UniRule"/>
</dbReference>
<dbReference type="CDD" id="cd00983">
    <property type="entry name" value="RecA"/>
    <property type="match status" value="1"/>
</dbReference>
<dbReference type="FunFam" id="3.40.50.300:FF:000087">
    <property type="entry name" value="Recombinase RecA"/>
    <property type="match status" value="1"/>
</dbReference>
<dbReference type="Gene3D" id="3.40.50.300">
    <property type="entry name" value="P-loop containing nucleotide triphosphate hydrolases"/>
    <property type="match status" value="1"/>
</dbReference>
<dbReference type="HAMAP" id="MF_00268">
    <property type="entry name" value="RecA"/>
    <property type="match status" value="1"/>
</dbReference>
<dbReference type="InterPro" id="IPR003593">
    <property type="entry name" value="AAA+_ATPase"/>
</dbReference>
<dbReference type="InterPro" id="IPR013765">
    <property type="entry name" value="DNA_recomb/repair_RecA"/>
</dbReference>
<dbReference type="InterPro" id="IPR020584">
    <property type="entry name" value="DNA_recomb/repair_RecA_CS"/>
</dbReference>
<dbReference type="InterPro" id="IPR027417">
    <property type="entry name" value="P-loop_NTPase"/>
</dbReference>
<dbReference type="InterPro" id="IPR049261">
    <property type="entry name" value="RecA-like_C"/>
</dbReference>
<dbReference type="InterPro" id="IPR049428">
    <property type="entry name" value="RecA-like_N"/>
</dbReference>
<dbReference type="InterPro" id="IPR020588">
    <property type="entry name" value="RecA_ATP-bd"/>
</dbReference>
<dbReference type="InterPro" id="IPR023400">
    <property type="entry name" value="RecA_C_sf"/>
</dbReference>
<dbReference type="InterPro" id="IPR020587">
    <property type="entry name" value="RecA_monomer-monomer_interface"/>
</dbReference>
<dbReference type="NCBIfam" id="TIGR02012">
    <property type="entry name" value="tigrfam_recA"/>
    <property type="match status" value="1"/>
</dbReference>
<dbReference type="PANTHER" id="PTHR45900:SF1">
    <property type="entry name" value="MITOCHONDRIAL DNA REPAIR PROTEIN RECA HOMOLOG-RELATED"/>
    <property type="match status" value="1"/>
</dbReference>
<dbReference type="PANTHER" id="PTHR45900">
    <property type="entry name" value="RECA"/>
    <property type="match status" value="1"/>
</dbReference>
<dbReference type="Pfam" id="PF00154">
    <property type="entry name" value="RecA"/>
    <property type="match status" value="1"/>
</dbReference>
<dbReference type="Pfam" id="PF21096">
    <property type="entry name" value="RecA_C"/>
    <property type="match status" value="1"/>
</dbReference>
<dbReference type="PRINTS" id="PR00142">
    <property type="entry name" value="RECA"/>
</dbReference>
<dbReference type="SMART" id="SM00382">
    <property type="entry name" value="AAA"/>
    <property type="match status" value="1"/>
</dbReference>
<dbReference type="SUPFAM" id="SSF52540">
    <property type="entry name" value="P-loop containing nucleoside triphosphate hydrolases"/>
    <property type="match status" value="1"/>
</dbReference>
<dbReference type="SUPFAM" id="SSF54752">
    <property type="entry name" value="RecA protein, C-terminal domain"/>
    <property type="match status" value="1"/>
</dbReference>
<dbReference type="PROSITE" id="PS00321">
    <property type="entry name" value="RECA_1"/>
    <property type="match status" value="1"/>
</dbReference>
<dbReference type="PROSITE" id="PS50162">
    <property type="entry name" value="RECA_2"/>
    <property type="match status" value="1"/>
</dbReference>
<dbReference type="PROSITE" id="PS50163">
    <property type="entry name" value="RECA_3"/>
    <property type="match status" value="1"/>
</dbReference>
<gene>
    <name evidence="1" type="primary">recA</name>
    <name type="ordered locus">LEPBI_I2446</name>
</gene>
<protein>
    <recommendedName>
        <fullName evidence="1">Protein RecA</fullName>
    </recommendedName>
    <alternativeName>
        <fullName evidence="1">Recombinase A</fullName>
    </alternativeName>
</protein>
<comment type="function">
    <text evidence="1">Can catalyze the hydrolysis of ATP in the presence of single-stranded DNA, the ATP-dependent uptake of single-stranded DNA by duplex DNA, and the ATP-dependent hybridization of homologous single-stranded DNAs. It interacts with LexA causing its activation and leading to its autocatalytic cleavage.</text>
</comment>
<comment type="subcellular location">
    <subcellularLocation>
        <location evidence="1">Cytoplasm</location>
    </subcellularLocation>
</comment>
<comment type="similarity">
    <text evidence="1">Belongs to the RecA family.</text>
</comment>
<proteinExistence type="inferred from homology"/>
<keyword id="KW-0067">ATP-binding</keyword>
<keyword id="KW-0963">Cytoplasm</keyword>
<keyword id="KW-0227">DNA damage</keyword>
<keyword id="KW-0233">DNA recombination</keyword>
<keyword id="KW-0234">DNA repair</keyword>
<keyword id="KW-0238">DNA-binding</keyword>
<keyword id="KW-0547">Nucleotide-binding</keyword>
<keyword id="KW-1185">Reference proteome</keyword>
<keyword id="KW-0742">SOS response</keyword>
<reference key="1">
    <citation type="journal article" date="2002" name="J. Bacteriol.">
        <title>Inactivation of the spirochete recA gene results in a mutant with low viability and irregular nucleoid morphology.</title>
        <authorList>
            <person name="Tchamedeu Kameni A.-P."/>
            <person name="Couture-Tosi E."/>
            <person name="Saint-Girons I."/>
            <person name="Picardeau M."/>
        </authorList>
    </citation>
    <scope>NUCLEOTIDE SEQUENCE [GENOMIC DNA]</scope>
</reference>
<reference key="2">
    <citation type="journal article" date="2008" name="PLoS ONE">
        <title>Genome sequence of the saprophyte Leptospira biflexa provides insights into the evolution of Leptospira and the pathogenesis of leptospirosis.</title>
        <authorList>
            <person name="Picardeau M."/>
            <person name="Bulach D.M."/>
            <person name="Bouchier C."/>
            <person name="Zuerner R.L."/>
            <person name="Zidane N."/>
            <person name="Wilson P.J."/>
            <person name="Creno S."/>
            <person name="Kuczek E.S."/>
            <person name="Bommezzadri S."/>
            <person name="Davis J.C."/>
            <person name="McGrath A."/>
            <person name="Johnson M.J."/>
            <person name="Boursaux-Eude C."/>
            <person name="Seemann T."/>
            <person name="Rouy Z."/>
            <person name="Coppel R.L."/>
            <person name="Rood J.I."/>
            <person name="Lajus A."/>
            <person name="Davies J.K."/>
            <person name="Medigue C."/>
            <person name="Adler B."/>
        </authorList>
    </citation>
    <scope>NUCLEOTIDE SEQUENCE [LARGE SCALE GENOMIC DNA]</scope>
    <source>
        <strain>Patoc 1 / ATCC 23582 / Paris</strain>
    </source>
</reference>
<name>RECA_LEPBP</name>
<feature type="chain" id="PRO_0000342088" description="Protein RecA">
    <location>
        <begin position="1"/>
        <end position="387"/>
    </location>
</feature>
<feature type="region of interest" description="Disordered" evidence="2">
    <location>
        <begin position="355"/>
        <end position="387"/>
    </location>
</feature>
<feature type="compositionally biased region" description="Basic and acidic residues" evidence="2">
    <location>
        <begin position="355"/>
        <end position="369"/>
    </location>
</feature>
<feature type="binding site" evidence="1">
    <location>
        <begin position="78"/>
        <end position="85"/>
    </location>
    <ligand>
        <name>ATP</name>
        <dbReference type="ChEBI" id="CHEBI:30616"/>
    </ligand>
</feature>
<feature type="sequence conflict" description="In Ref. 1; AAL01117." evidence="3" ref="1">
    <original>D</original>
    <variation>N</variation>
    <location>
        <position position="337"/>
    </location>
</feature>
<organism>
    <name type="scientific">Leptospira biflexa serovar Patoc (strain Patoc 1 / ATCC 23582 / Paris)</name>
    <dbReference type="NCBI Taxonomy" id="456481"/>
    <lineage>
        <taxon>Bacteria</taxon>
        <taxon>Pseudomonadati</taxon>
        <taxon>Spirochaetota</taxon>
        <taxon>Spirochaetia</taxon>
        <taxon>Leptospirales</taxon>
        <taxon>Leptospiraceae</taxon>
        <taxon>Leptospira</taxon>
    </lineage>
</organism>
<sequence>MKKEKADKALEKETDQRKQAIDAALGQIEKQFGKGSIMRLGADTRMSEMNVVSTGSLDLDIALGIGGFPSGRIIEIYGPESSGKTTLTLSAIAETQKKGGIAAFIDAEHALDPSYAKKLGVNVDDLLVAQPDNGEEALEICESLVRSNAIDLIVIDSVAALVPKAEIEGDMGDSHMGLQARLMSQALRKLTGTISKSSTTVIFINQIRMKIGVMFGSPETTTGGNALKFYASIRLDIRRIETLKEKEEPVGNRVRVKVVKNKCAPPFRQAEFDIMYANGINRESSLIDLAVRHDLVAKAGSWYSYNGEKIGQGKEQVRNFFLENPDIAFKIENQVRDLNALPLLDQAKIQTREVKSIERDTKETKETKSKQPVSFSTEADGDIAVGE</sequence>